<evidence type="ECO:0000255" key="1">
    <source>
        <dbReference type="HAMAP-Rule" id="MF_02086"/>
    </source>
</evidence>
<organism>
    <name type="scientific">Campylobacter jejuni (strain RM1221)</name>
    <dbReference type="NCBI Taxonomy" id="195099"/>
    <lineage>
        <taxon>Bacteria</taxon>
        <taxon>Pseudomonadati</taxon>
        <taxon>Campylobacterota</taxon>
        <taxon>Epsilonproteobacteria</taxon>
        <taxon>Campylobacterales</taxon>
        <taxon>Campylobacteraceae</taxon>
        <taxon>Campylobacter</taxon>
    </lineage>
</organism>
<reference key="1">
    <citation type="journal article" date="2005" name="PLoS Biol.">
        <title>Major structural differences and novel potential virulence mechanisms from the genomes of multiple Campylobacter species.</title>
        <authorList>
            <person name="Fouts D.E."/>
            <person name="Mongodin E.F."/>
            <person name="Mandrell R.E."/>
            <person name="Miller W.G."/>
            <person name="Rasko D.A."/>
            <person name="Ravel J."/>
            <person name="Brinkac L.M."/>
            <person name="DeBoy R.T."/>
            <person name="Parker C.T."/>
            <person name="Daugherty S.C."/>
            <person name="Dodson R.J."/>
            <person name="Durkin A.S."/>
            <person name="Madupu R."/>
            <person name="Sullivan S.A."/>
            <person name="Shetty J.U."/>
            <person name="Ayodeji M.A."/>
            <person name="Shvartsbeyn A."/>
            <person name="Schatz M.C."/>
            <person name="Badger J.H."/>
            <person name="Fraser C.M."/>
            <person name="Nelson K.E."/>
        </authorList>
    </citation>
    <scope>NUCLEOTIDE SEQUENCE [LARGE SCALE GENOMIC DNA]</scope>
    <source>
        <strain>RM1221</strain>
    </source>
</reference>
<keyword id="KW-0170">Cobalt</keyword>
<keyword id="KW-0963">Cytoplasm</keyword>
<keyword id="KW-0460">Magnesium</keyword>
<keyword id="KW-0479">Metal-binding</keyword>
<keyword id="KW-0520">NAD</keyword>
<keyword id="KW-0521">NADP</keyword>
<keyword id="KW-0560">Oxidoreductase</keyword>
<keyword id="KW-0664">Pyridoxine biosynthesis</keyword>
<keyword id="KW-0862">Zinc</keyword>
<sequence>MKKLAISIGDINGIGLEILVRSHEELSKICTPFYFIHESLLDKASKLLNLKLFNAKIVAFKDGKDYEFNFVKKENSLEIYSFYLPLDFKVDENFEIKAGEIDTKSGLYGFLSFKAASYFVYEKHAHALLTLPIHKKAWEDAGLKYKGHTDALRDFFKKNAIMMLGCKELFVGLFSEHIPLAKVSKKITFKNLSIFLKDFYKETHFKKMGLLGFNPHAGDYGVIGGEEEKIMEKAIAFVNAFLHSKKDEKFFKKALKDENLQKELLLNFKGKGVYLPHPLVADTAFTKTGLKNCNRLVAMYHDLALAPLKALYFDKSINVSLNLPIIRVSVDHGTAFDKAYKNAKINTKSYFEAAKFAINLHSKA</sequence>
<accession>Q5HTM4</accession>
<gene>
    <name evidence="1" type="primary">pdxA</name>
    <name type="ordered locus">CJE1374</name>
</gene>
<proteinExistence type="inferred from homology"/>
<name>PDXA_CAMJR</name>
<comment type="function">
    <text evidence="1">Catalyzes the NAD(P)-dependent oxidation of 4-(phosphooxy)-L-threonine (HTP) into 2-amino-3-oxo-4-(phosphooxy)butyric acid which spontaneously decarboxylates to form 3-amino-2-oxopropyl phosphate (AHAP).</text>
</comment>
<comment type="catalytic activity">
    <reaction evidence="1">
        <text>4-(phosphooxy)-L-threonine + NAD(+) = 3-amino-2-oxopropyl phosphate + CO2 + NADH</text>
        <dbReference type="Rhea" id="RHEA:32275"/>
        <dbReference type="ChEBI" id="CHEBI:16526"/>
        <dbReference type="ChEBI" id="CHEBI:57279"/>
        <dbReference type="ChEBI" id="CHEBI:57540"/>
        <dbReference type="ChEBI" id="CHEBI:57945"/>
        <dbReference type="ChEBI" id="CHEBI:58452"/>
        <dbReference type="EC" id="1.1.1.262"/>
    </reaction>
</comment>
<comment type="cofactor">
    <cofactor evidence="1">
        <name>Zn(2+)</name>
        <dbReference type="ChEBI" id="CHEBI:29105"/>
    </cofactor>
    <cofactor evidence="1">
        <name>Mg(2+)</name>
        <dbReference type="ChEBI" id="CHEBI:18420"/>
    </cofactor>
    <cofactor evidence="1">
        <name>Co(2+)</name>
        <dbReference type="ChEBI" id="CHEBI:48828"/>
    </cofactor>
</comment>
<comment type="pathway">
    <text evidence="1">Cofactor biosynthesis; pyridoxine 5'-phosphate biosynthesis; pyridoxine 5'-phosphate from D-erythrose 4-phosphate: step 4/5.</text>
</comment>
<comment type="subunit">
    <text evidence="1">Homodimer.</text>
</comment>
<comment type="subcellular location">
    <subcellularLocation>
        <location evidence="1">Cytoplasm</location>
    </subcellularLocation>
</comment>
<comment type="miscellaneous">
    <text evidence="1">The active site is located at the dimer interface.</text>
</comment>
<comment type="similarity">
    <text evidence="1">Belongs to the PdxA family.</text>
</comment>
<feature type="chain" id="PRO_1000051494" description="4-hydroxythreonine-4-phosphate dehydrogenase">
    <location>
        <begin position="1"/>
        <end position="364"/>
    </location>
</feature>
<feature type="binding site" evidence="1">
    <location>
        <position position="148"/>
    </location>
    <ligand>
        <name>substrate</name>
    </ligand>
</feature>
<feature type="binding site" evidence="1">
    <location>
        <position position="149"/>
    </location>
    <ligand>
        <name>substrate</name>
    </ligand>
</feature>
<feature type="binding site" evidence="1">
    <location>
        <position position="177"/>
    </location>
    <ligand>
        <name>a divalent metal cation</name>
        <dbReference type="ChEBI" id="CHEBI:60240"/>
        <note>ligand shared between dimeric partners</note>
    </ligand>
</feature>
<feature type="binding site" evidence="1">
    <location>
        <position position="216"/>
    </location>
    <ligand>
        <name>a divalent metal cation</name>
        <dbReference type="ChEBI" id="CHEBI:60240"/>
        <note>ligand shared between dimeric partners</note>
    </ligand>
</feature>
<feature type="binding site" evidence="1">
    <location>
        <position position="301"/>
    </location>
    <ligand>
        <name>a divalent metal cation</name>
        <dbReference type="ChEBI" id="CHEBI:60240"/>
        <note>ligand shared between dimeric partners</note>
    </ligand>
</feature>
<feature type="binding site" evidence="1">
    <location>
        <position position="309"/>
    </location>
    <ligand>
        <name>substrate</name>
    </ligand>
</feature>
<feature type="binding site" evidence="1">
    <location>
        <position position="318"/>
    </location>
    <ligand>
        <name>substrate</name>
    </ligand>
</feature>
<feature type="binding site" evidence="1">
    <location>
        <position position="327"/>
    </location>
    <ligand>
        <name>substrate</name>
    </ligand>
</feature>
<protein>
    <recommendedName>
        <fullName evidence="1">4-hydroxythreonine-4-phosphate dehydrogenase</fullName>
        <ecNumber evidence="1">1.1.1.262</ecNumber>
    </recommendedName>
    <alternativeName>
        <fullName evidence="1">4-(phosphohydroxy)-L-threonine dehydrogenase</fullName>
    </alternativeName>
</protein>
<dbReference type="EC" id="1.1.1.262" evidence="1"/>
<dbReference type="EMBL" id="CP000025">
    <property type="protein sequence ID" value="AAW35694.1"/>
    <property type="molecule type" value="Genomic_DNA"/>
</dbReference>
<dbReference type="RefSeq" id="WP_011049909.1">
    <property type="nucleotide sequence ID" value="NC_003912.7"/>
</dbReference>
<dbReference type="SMR" id="Q5HTM4"/>
<dbReference type="KEGG" id="cjr:CJE1374"/>
<dbReference type="HOGENOM" id="CLU_040168_0_0_7"/>
<dbReference type="UniPathway" id="UPA00244">
    <property type="reaction ID" value="UER00312"/>
</dbReference>
<dbReference type="GO" id="GO:0005737">
    <property type="term" value="C:cytoplasm"/>
    <property type="evidence" value="ECO:0007669"/>
    <property type="project" value="UniProtKB-SubCell"/>
</dbReference>
<dbReference type="GO" id="GO:0050570">
    <property type="term" value="F:4-hydroxythreonine-4-phosphate dehydrogenase activity"/>
    <property type="evidence" value="ECO:0007669"/>
    <property type="project" value="UniProtKB-UniRule"/>
</dbReference>
<dbReference type="GO" id="GO:0050897">
    <property type="term" value="F:cobalt ion binding"/>
    <property type="evidence" value="ECO:0007669"/>
    <property type="project" value="UniProtKB-UniRule"/>
</dbReference>
<dbReference type="GO" id="GO:0000287">
    <property type="term" value="F:magnesium ion binding"/>
    <property type="evidence" value="ECO:0007669"/>
    <property type="project" value="UniProtKB-UniRule"/>
</dbReference>
<dbReference type="GO" id="GO:0051287">
    <property type="term" value="F:NAD binding"/>
    <property type="evidence" value="ECO:0007669"/>
    <property type="project" value="InterPro"/>
</dbReference>
<dbReference type="GO" id="GO:0008270">
    <property type="term" value="F:zinc ion binding"/>
    <property type="evidence" value="ECO:0007669"/>
    <property type="project" value="UniProtKB-UniRule"/>
</dbReference>
<dbReference type="GO" id="GO:0042823">
    <property type="term" value="P:pyridoxal phosphate biosynthetic process"/>
    <property type="evidence" value="ECO:0007669"/>
    <property type="project" value="UniProtKB-UniRule"/>
</dbReference>
<dbReference type="GO" id="GO:0008615">
    <property type="term" value="P:pyridoxine biosynthetic process"/>
    <property type="evidence" value="ECO:0007669"/>
    <property type="project" value="UniProtKB-UniRule"/>
</dbReference>
<dbReference type="Gene3D" id="3.40.718.10">
    <property type="entry name" value="Isopropylmalate Dehydrogenase"/>
    <property type="match status" value="1"/>
</dbReference>
<dbReference type="HAMAP" id="MF_02086">
    <property type="entry name" value="PdxA_Epsilonprot"/>
    <property type="match status" value="1"/>
</dbReference>
<dbReference type="InterPro" id="IPR037539">
    <property type="entry name" value="PdxA_epsilonprot"/>
</dbReference>
<dbReference type="InterPro" id="IPR005255">
    <property type="entry name" value="PdxA_fam"/>
</dbReference>
<dbReference type="NCBIfam" id="NF003040">
    <property type="entry name" value="PRK03946.1"/>
    <property type="match status" value="1"/>
</dbReference>
<dbReference type="PANTHER" id="PTHR30004">
    <property type="entry name" value="4-HYDROXYTHREONINE-4-PHOSPHATE DEHYDROGENASE"/>
    <property type="match status" value="1"/>
</dbReference>
<dbReference type="PANTHER" id="PTHR30004:SF6">
    <property type="entry name" value="D-THREONATE 4-PHOSPHATE DEHYDROGENASE"/>
    <property type="match status" value="1"/>
</dbReference>
<dbReference type="Pfam" id="PF04166">
    <property type="entry name" value="PdxA"/>
    <property type="match status" value="1"/>
</dbReference>
<dbReference type="SUPFAM" id="SSF53659">
    <property type="entry name" value="Isocitrate/Isopropylmalate dehydrogenase-like"/>
    <property type="match status" value="1"/>
</dbReference>